<accession>Q75C70</accession>
<reference key="1">
    <citation type="journal article" date="2004" name="Science">
        <title>The Ashbya gossypii genome as a tool for mapping the ancient Saccharomyces cerevisiae genome.</title>
        <authorList>
            <person name="Dietrich F.S."/>
            <person name="Voegeli S."/>
            <person name="Brachat S."/>
            <person name="Lerch A."/>
            <person name="Gates K."/>
            <person name="Steiner S."/>
            <person name="Mohr C."/>
            <person name="Poehlmann R."/>
            <person name="Luedi P."/>
            <person name="Choi S."/>
            <person name="Wing R.A."/>
            <person name="Flavier A."/>
            <person name="Gaffney T.D."/>
            <person name="Philippsen P."/>
        </authorList>
    </citation>
    <scope>NUCLEOTIDE SEQUENCE [LARGE SCALE GENOMIC DNA]</scope>
    <source>
        <strain>ATCC 10895 / CBS 109.51 / FGSC 9923 / NRRL Y-1056</strain>
    </source>
</reference>
<reference key="2">
    <citation type="journal article" date="2013" name="G3 (Bethesda)">
        <title>Genomes of Ashbya fungi isolated from insects reveal four mating-type loci, numerous translocations, lack of transposons, and distinct gene duplications.</title>
        <authorList>
            <person name="Dietrich F.S."/>
            <person name="Voegeli S."/>
            <person name="Kuo S."/>
            <person name="Philippsen P."/>
        </authorList>
    </citation>
    <scope>GENOME REANNOTATION</scope>
    <source>
        <strain>ATCC 10895 / CBS 109.51 / FGSC 9923 / NRRL Y-1056</strain>
    </source>
</reference>
<protein>
    <recommendedName>
        <fullName>Nucleolar protein 9</fullName>
    </recommendedName>
    <alternativeName>
        <fullName>Pumilio domain-containing protein NOP9</fullName>
    </alternativeName>
</protein>
<feature type="chain" id="PRO_0000407795" description="Nucleolar protein 9">
    <location>
        <begin position="1"/>
        <end position="678"/>
    </location>
</feature>
<feature type="repeat" description="Pumilio 1">
    <location>
        <begin position="91"/>
        <end position="126"/>
    </location>
</feature>
<feature type="repeat" description="Pumilio 2">
    <location>
        <begin position="127"/>
        <end position="162"/>
    </location>
</feature>
<feature type="repeat" description="Pumilio 3">
    <location>
        <begin position="189"/>
        <end position="224"/>
    </location>
</feature>
<feature type="repeat" description="Pumilio 4">
    <location>
        <begin position="288"/>
        <end position="326"/>
    </location>
</feature>
<feature type="repeat" description="Pumilio 5">
    <location>
        <begin position="338"/>
        <end position="373"/>
    </location>
</feature>
<feature type="repeat" description="Pumilio 6">
    <location>
        <begin position="375"/>
        <end position="411"/>
    </location>
</feature>
<feature type="repeat" description="Pumilio 7">
    <location>
        <begin position="515"/>
        <end position="552"/>
    </location>
</feature>
<feature type="repeat" description="Pumilio 8">
    <location>
        <begin position="553"/>
        <end position="591"/>
    </location>
</feature>
<feature type="region of interest" description="Disordered" evidence="2">
    <location>
        <begin position="1"/>
        <end position="31"/>
    </location>
</feature>
<feature type="region of interest" description="Disordered" evidence="2">
    <location>
        <begin position="636"/>
        <end position="678"/>
    </location>
</feature>
<feature type="compositionally biased region" description="Basic residues" evidence="2">
    <location>
        <begin position="1"/>
        <end position="10"/>
    </location>
</feature>
<feature type="compositionally biased region" description="Basic and acidic residues" evidence="2">
    <location>
        <begin position="13"/>
        <end position="30"/>
    </location>
</feature>
<feature type="compositionally biased region" description="Basic residues" evidence="2">
    <location>
        <begin position="668"/>
        <end position="678"/>
    </location>
</feature>
<dbReference type="EMBL" id="AE016816">
    <property type="protein sequence ID" value="AAS51273.2"/>
    <property type="molecule type" value="Genomic_DNA"/>
</dbReference>
<dbReference type="RefSeq" id="NP_983449.2">
    <property type="nucleotide sequence ID" value="NM_208802.2"/>
</dbReference>
<dbReference type="SMR" id="Q75C70"/>
<dbReference type="FunCoup" id="Q75C70">
    <property type="interactions" value="988"/>
</dbReference>
<dbReference type="STRING" id="284811.Q75C70"/>
<dbReference type="EnsemblFungi" id="AAS51273">
    <property type="protein sequence ID" value="AAS51273"/>
    <property type="gene ID" value="AGOS_ACR046W"/>
</dbReference>
<dbReference type="GeneID" id="4619574"/>
<dbReference type="KEGG" id="ago:AGOS_ACR046W"/>
<dbReference type="eggNOG" id="KOG2188">
    <property type="taxonomic scope" value="Eukaryota"/>
</dbReference>
<dbReference type="HOGENOM" id="CLU_008720_1_1_1"/>
<dbReference type="InParanoid" id="Q75C70"/>
<dbReference type="OMA" id="HHLVRNF"/>
<dbReference type="OrthoDB" id="392571at2759"/>
<dbReference type="Proteomes" id="UP000000591">
    <property type="component" value="Chromosome III"/>
</dbReference>
<dbReference type="GO" id="GO:0030686">
    <property type="term" value="C:90S preribosome"/>
    <property type="evidence" value="ECO:0000318"/>
    <property type="project" value="GO_Central"/>
</dbReference>
<dbReference type="GO" id="GO:0005730">
    <property type="term" value="C:nucleolus"/>
    <property type="evidence" value="ECO:0000318"/>
    <property type="project" value="GO_Central"/>
</dbReference>
<dbReference type="GO" id="GO:0030688">
    <property type="term" value="C:preribosome, small subunit precursor"/>
    <property type="evidence" value="ECO:0000318"/>
    <property type="project" value="GO_Central"/>
</dbReference>
<dbReference type="GO" id="GO:0032040">
    <property type="term" value="C:small-subunit processome"/>
    <property type="evidence" value="ECO:0007669"/>
    <property type="project" value="EnsemblFungi"/>
</dbReference>
<dbReference type="GO" id="GO:0003723">
    <property type="term" value="F:RNA binding"/>
    <property type="evidence" value="ECO:0000318"/>
    <property type="project" value="GO_Central"/>
</dbReference>
<dbReference type="GO" id="GO:0000480">
    <property type="term" value="P:endonucleolytic cleavage in 5'-ETS of tricistronic rRNA transcript (SSU-rRNA, 5.8S rRNA, LSU-rRNA)"/>
    <property type="evidence" value="ECO:0000318"/>
    <property type="project" value="GO_Central"/>
</dbReference>
<dbReference type="GO" id="GO:0000447">
    <property type="term" value="P:endonucleolytic cleavage in ITS1 to separate SSU-rRNA from 5.8S rRNA and LSU-rRNA from tricistronic rRNA transcript (SSU-rRNA, 5.8S rRNA, LSU-rRNA)"/>
    <property type="evidence" value="ECO:0000318"/>
    <property type="project" value="GO_Central"/>
</dbReference>
<dbReference type="GO" id="GO:0000472">
    <property type="term" value="P:endonucleolytic cleavage to generate mature 5'-end of SSU-rRNA from (SSU-rRNA, 5.8S rRNA, LSU-rRNA)"/>
    <property type="evidence" value="ECO:0000318"/>
    <property type="project" value="GO_Central"/>
</dbReference>
<dbReference type="GO" id="GO:0000056">
    <property type="term" value="P:ribosomal small subunit export from nucleus"/>
    <property type="evidence" value="ECO:0000318"/>
    <property type="project" value="GO_Central"/>
</dbReference>
<dbReference type="Gene3D" id="1.25.10.10">
    <property type="entry name" value="Leucine-rich Repeat Variant"/>
    <property type="match status" value="3"/>
</dbReference>
<dbReference type="InterPro" id="IPR011989">
    <property type="entry name" value="ARM-like"/>
</dbReference>
<dbReference type="InterPro" id="IPR016024">
    <property type="entry name" value="ARM-type_fold"/>
</dbReference>
<dbReference type="InterPro" id="IPR040000">
    <property type="entry name" value="NOP9"/>
</dbReference>
<dbReference type="InterPro" id="IPR001313">
    <property type="entry name" value="Pumilio_RNA-bd_rpt"/>
</dbReference>
<dbReference type="PANTHER" id="PTHR13102">
    <property type="entry name" value="NUCLEOLAR PROTEIN 9"/>
    <property type="match status" value="1"/>
</dbReference>
<dbReference type="PANTHER" id="PTHR13102:SF0">
    <property type="entry name" value="NUCLEOLAR PROTEIN 9"/>
    <property type="match status" value="1"/>
</dbReference>
<dbReference type="Pfam" id="PF22493">
    <property type="entry name" value="PUF_NOP9"/>
    <property type="match status" value="1"/>
</dbReference>
<dbReference type="SMART" id="SM00025">
    <property type="entry name" value="Pumilio"/>
    <property type="match status" value="8"/>
</dbReference>
<dbReference type="SUPFAM" id="SSF48371">
    <property type="entry name" value="ARM repeat"/>
    <property type="match status" value="2"/>
</dbReference>
<keyword id="KW-0539">Nucleus</keyword>
<keyword id="KW-1185">Reference proteome</keyword>
<keyword id="KW-0677">Repeat</keyword>
<keyword id="KW-0690">Ribosome biogenesis</keyword>
<keyword id="KW-0698">rRNA processing</keyword>
<sequence>MAKQRGRKLLQKQNKDDFKHSLDQERHEEEVIQVPVDKAPAPISADGPNTFFGTLDTQELEYFKRAESTMAVDTFESADEKYQFINSVIEESKGKELKLATSQICSKLMERIILAADDQQLKAIFQGINGFFVNLSYNKYASHVVETLLVRSAALIEKELLTPVFEAELDGDEQVYASMENMFLFMLNELKPHMKMMINHQYASHVFRLLILVLSAKKLPKSTQSNSALRSKKSKIARKMVDLKDNADFDRTYRTPDSFKLELKGILVMLYKQFTNGIEPGTKHSEVNIACVTKFREYCVDKVASPVIQLIIQVEGIFDRDRSFWNLVFSNTEQNDPKEESFMEYLLSDSVGSHFLQAVIGFARTKQVERLYKLYMQDRIVKLAKRDTTGAFVIMSLLQNLGSKEVKSILDDLVPELSILLNSNLDFGSEIIEASIRQGDYKKTEIVEQLGKKYYPADSESKNILESCLQLASSTLGNTKDDWPTADERRRALFLEKLINFDDYFLEIAVESLLNLPEERIMQMCYHGVFSHVVEHVLQAKRVETVKRKLLLNILYKDAVNLACNAYGSHIMDKLWEFTAKLTLYKERIANLLLEEADKVKNSIYGRQVWKNWHLELYVRKRFDWRKKVKEQELEVFPDSKPLQPKQKESIPAKRSAPSNNQRPGSLNKKRNAEKHHT</sequence>
<organism>
    <name type="scientific">Eremothecium gossypii (strain ATCC 10895 / CBS 109.51 / FGSC 9923 / NRRL Y-1056)</name>
    <name type="common">Yeast</name>
    <name type="synonym">Ashbya gossypii</name>
    <dbReference type="NCBI Taxonomy" id="284811"/>
    <lineage>
        <taxon>Eukaryota</taxon>
        <taxon>Fungi</taxon>
        <taxon>Dikarya</taxon>
        <taxon>Ascomycota</taxon>
        <taxon>Saccharomycotina</taxon>
        <taxon>Saccharomycetes</taxon>
        <taxon>Saccharomycetales</taxon>
        <taxon>Saccharomycetaceae</taxon>
        <taxon>Eremothecium</taxon>
    </lineage>
</organism>
<comment type="function">
    <text evidence="1">RNA-binding nucleolar protein required for pre-rRNA processing. Involved in production of 18S rRNA and assembly of small ribosomal subunit (By similarity).</text>
</comment>
<comment type="subcellular location">
    <subcellularLocation>
        <location evidence="1">Nucleus</location>
        <location evidence="1">Nucleolus</location>
    </subcellularLocation>
</comment>
<comment type="similarity">
    <text evidence="3">Belongs to the NOP9 family.</text>
</comment>
<evidence type="ECO:0000250" key="1"/>
<evidence type="ECO:0000256" key="2">
    <source>
        <dbReference type="SAM" id="MobiDB-lite"/>
    </source>
</evidence>
<evidence type="ECO:0000305" key="3"/>
<proteinExistence type="inferred from homology"/>
<gene>
    <name type="primary">NOP9</name>
    <name type="ordered locus">ACR046W</name>
</gene>
<name>NOP9_EREGS</name>